<protein>
    <recommendedName>
        <fullName evidence="1">Lipid-A-disaccharide synthase</fullName>
        <ecNumber evidence="1">2.4.1.182</ecNumber>
    </recommendedName>
</protein>
<name>LPXB_COLP3</name>
<reference key="1">
    <citation type="journal article" date="2005" name="Proc. Natl. Acad. Sci. U.S.A.">
        <title>The psychrophilic lifestyle as revealed by the genome sequence of Colwellia psychrerythraea 34H through genomic and proteomic analyses.</title>
        <authorList>
            <person name="Methe B.A."/>
            <person name="Nelson K.E."/>
            <person name="Deming J.W."/>
            <person name="Momen B."/>
            <person name="Melamud E."/>
            <person name="Zhang X."/>
            <person name="Moult J."/>
            <person name="Madupu R."/>
            <person name="Nelson W.C."/>
            <person name="Dodson R.J."/>
            <person name="Brinkac L.M."/>
            <person name="Daugherty S.C."/>
            <person name="Durkin A.S."/>
            <person name="DeBoy R.T."/>
            <person name="Kolonay J.F."/>
            <person name="Sullivan S.A."/>
            <person name="Zhou L."/>
            <person name="Davidsen T.M."/>
            <person name="Wu M."/>
            <person name="Huston A.L."/>
            <person name="Lewis M."/>
            <person name="Weaver B."/>
            <person name="Weidman J.F."/>
            <person name="Khouri H."/>
            <person name="Utterback T.R."/>
            <person name="Feldblyum T.V."/>
            <person name="Fraser C.M."/>
        </authorList>
    </citation>
    <scope>NUCLEOTIDE SEQUENCE [LARGE SCALE GENOMIC DNA]</scope>
    <source>
        <strain>34H / ATCC BAA-681</strain>
    </source>
</reference>
<keyword id="KW-0328">Glycosyltransferase</keyword>
<keyword id="KW-0441">Lipid A biosynthesis</keyword>
<keyword id="KW-0444">Lipid biosynthesis</keyword>
<keyword id="KW-0443">Lipid metabolism</keyword>
<keyword id="KW-0808">Transferase</keyword>
<feature type="chain" id="PRO_0000255175" description="Lipid-A-disaccharide synthase">
    <location>
        <begin position="1"/>
        <end position="393"/>
    </location>
</feature>
<comment type="function">
    <text evidence="1">Condensation of UDP-2,3-diacylglucosamine and 2,3-diacylglucosamine-1-phosphate to form lipid A disaccharide, a precursor of lipid A, a phosphorylated glycolipid that anchors the lipopolysaccharide to the outer membrane of the cell.</text>
</comment>
<comment type="catalytic activity">
    <reaction evidence="1">
        <text>a lipid X + a UDP-2-N,3-O-bis[(3R)-3-hydroxyacyl]-alpha-D-glucosamine = a lipid A disaccharide + UDP + H(+)</text>
        <dbReference type="Rhea" id="RHEA:67828"/>
        <dbReference type="ChEBI" id="CHEBI:15378"/>
        <dbReference type="ChEBI" id="CHEBI:58223"/>
        <dbReference type="ChEBI" id="CHEBI:137748"/>
        <dbReference type="ChEBI" id="CHEBI:176338"/>
        <dbReference type="ChEBI" id="CHEBI:176343"/>
        <dbReference type="EC" id="2.4.1.182"/>
    </reaction>
</comment>
<comment type="pathway">
    <text evidence="1">Bacterial outer membrane biogenesis; LPS lipid A biosynthesis.</text>
</comment>
<comment type="similarity">
    <text evidence="1">Belongs to the LpxB family.</text>
</comment>
<evidence type="ECO:0000255" key="1">
    <source>
        <dbReference type="HAMAP-Rule" id="MF_00392"/>
    </source>
</evidence>
<proteinExistence type="inferred from homology"/>
<sequence>MTTQNQNTHQQTVFAMVVGEHSGDTLGAGLITSLRQTHPHAKFIGIGGPKMLALGFESLFAMDELSVMGLVEVLGRIRRLLHVRKTLTDFFITNKPDVFIGIDAPDFNIGLELKLKVKGIKTVHYVSPSVWAWREKRIFKIAKATDMVLALLPFEKAFYDKHNVPCTFVGHPLADDIPMQSDKVLARDKLGLAQDKKILALMPGSRGGELSRLLEDFFESAKQLQAQDSELLFVAPMISEQRANQFNALKAELAPDLDIEIVLNQTQQVMAASDCLLTASGTVTLEAALIKRPMVICYKFSPITFFLGRRFVKLKWFSLPNLLTNKSLVPELLQKDVCPENIVPLVKERLYQDQSQLNDSFTAIHQQLKCDASKQAAKAVLDVLSSKLLSNNK</sequence>
<organism>
    <name type="scientific">Colwellia psychrerythraea (strain 34H / ATCC BAA-681)</name>
    <name type="common">Vibrio psychroerythus</name>
    <dbReference type="NCBI Taxonomy" id="167879"/>
    <lineage>
        <taxon>Bacteria</taxon>
        <taxon>Pseudomonadati</taxon>
        <taxon>Pseudomonadota</taxon>
        <taxon>Gammaproteobacteria</taxon>
        <taxon>Alteromonadales</taxon>
        <taxon>Colwelliaceae</taxon>
        <taxon>Colwellia</taxon>
    </lineage>
</organism>
<dbReference type="EC" id="2.4.1.182" evidence="1"/>
<dbReference type="EMBL" id="CP000083">
    <property type="protein sequence ID" value="AAZ28777.1"/>
    <property type="molecule type" value="Genomic_DNA"/>
</dbReference>
<dbReference type="RefSeq" id="WP_011042404.1">
    <property type="nucleotide sequence ID" value="NC_003910.7"/>
</dbReference>
<dbReference type="SMR" id="Q485F5"/>
<dbReference type="STRING" id="167879.CPS_1568"/>
<dbReference type="CAZy" id="GT19">
    <property type="family name" value="Glycosyltransferase Family 19"/>
</dbReference>
<dbReference type="KEGG" id="cps:CPS_1568"/>
<dbReference type="eggNOG" id="COG0763">
    <property type="taxonomic scope" value="Bacteria"/>
</dbReference>
<dbReference type="HOGENOM" id="CLU_036577_3_0_6"/>
<dbReference type="UniPathway" id="UPA00973"/>
<dbReference type="Proteomes" id="UP000000547">
    <property type="component" value="Chromosome"/>
</dbReference>
<dbReference type="GO" id="GO:0016020">
    <property type="term" value="C:membrane"/>
    <property type="evidence" value="ECO:0007669"/>
    <property type="project" value="GOC"/>
</dbReference>
<dbReference type="GO" id="GO:0008915">
    <property type="term" value="F:lipid-A-disaccharide synthase activity"/>
    <property type="evidence" value="ECO:0007669"/>
    <property type="project" value="UniProtKB-UniRule"/>
</dbReference>
<dbReference type="GO" id="GO:0005543">
    <property type="term" value="F:phospholipid binding"/>
    <property type="evidence" value="ECO:0007669"/>
    <property type="project" value="TreeGrafter"/>
</dbReference>
<dbReference type="GO" id="GO:0009245">
    <property type="term" value="P:lipid A biosynthetic process"/>
    <property type="evidence" value="ECO:0007669"/>
    <property type="project" value="UniProtKB-UniRule"/>
</dbReference>
<dbReference type="Gene3D" id="3.40.50.2000">
    <property type="entry name" value="Glycogen Phosphorylase B"/>
    <property type="match status" value="1"/>
</dbReference>
<dbReference type="HAMAP" id="MF_00392">
    <property type="entry name" value="LpxB"/>
    <property type="match status" value="1"/>
</dbReference>
<dbReference type="InterPro" id="IPR003835">
    <property type="entry name" value="Glyco_trans_19"/>
</dbReference>
<dbReference type="NCBIfam" id="TIGR00215">
    <property type="entry name" value="lpxB"/>
    <property type="match status" value="1"/>
</dbReference>
<dbReference type="PANTHER" id="PTHR30372">
    <property type="entry name" value="LIPID-A-DISACCHARIDE SYNTHASE"/>
    <property type="match status" value="1"/>
</dbReference>
<dbReference type="PANTHER" id="PTHR30372:SF4">
    <property type="entry name" value="LIPID-A-DISACCHARIDE SYNTHASE, MITOCHONDRIAL-RELATED"/>
    <property type="match status" value="1"/>
</dbReference>
<dbReference type="Pfam" id="PF02684">
    <property type="entry name" value="LpxB"/>
    <property type="match status" value="1"/>
</dbReference>
<dbReference type="SUPFAM" id="SSF53756">
    <property type="entry name" value="UDP-Glycosyltransferase/glycogen phosphorylase"/>
    <property type="match status" value="1"/>
</dbReference>
<gene>
    <name evidence="1" type="primary">lpxB</name>
    <name type="ordered locus">CPS_1568</name>
</gene>
<accession>Q485F5</accession>